<reference key="1">
    <citation type="submission" date="2008-06" db="EMBL/GenBank/DDBJ databases">
        <title>Complete sequence of Pelodictyon phaeoclathratiforme BU-1.</title>
        <authorList>
            <consortium name="US DOE Joint Genome Institute"/>
            <person name="Lucas S."/>
            <person name="Copeland A."/>
            <person name="Lapidus A."/>
            <person name="Glavina del Rio T."/>
            <person name="Dalin E."/>
            <person name="Tice H."/>
            <person name="Bruce D."/>
            <person name="Goodwin L."/>
            <person name="Pitluck S."/>
            <person name="Schmutz J."/>
            <person name="Larimer F."/>
            <person name="Land M."/>
            <person name="Hauser L."/>
            <person name="Kyrpides N."/>
            <person name="Mikhailova N."/>
            <person name="Liu Z."/>
            <person name="Li T."/>
            <person name="Zhao F."/>
            <person name="Overmann J."/>
            <person name="Bryant D.A."/>
            <person name="Richardson P."/>
        </authorList>
    </citation>
    <scope>NUCLEOTIDE SEQUENCE [LARGE SCALE GENOMIC DNA]</scope>
    <source>
        <strain>DSM 5477 / BU-1</strain>
    </source>
</reference>
<feature type="chain" id="PRO_0000389816" description="Acetyl-coenzyme A carboxylase carboxyl transferase subunit beta">
    <location>
        <begin position="1"/>
        <end position="279"/>
    </location>
</feature>
<feature type="domain" description="CoA carboxyltransferase N-terminal" evidence="2">
    <location>
        <begin position="23"/>
        <end position="279"/>
    </location>
</feature>
<feature type="zinc finger region" description="C4-type" evidence="1">
    <location>
        <begin position="27"/>
        <end position="49"/>
    </location>
</feature>
<feature type="binding site" evidence="1">
    <location>
        <position position="27"/>
    </location>
    <ligand>
        <name>Zn(2+)</name>
        <dbReference type="ChEBI" id="CHEBI:29105"/>
    </ligand>
</feature>
<feature type="binding site" evidence="1">
    <location>
        <position position="30"/>
    </location>
    <ligand>
        <name>Zn(2+)</name>
        <dbReference type="ChEBI" id="CHEBI:29105"/>
    </ligand>
</feature>
<feature type="binding site" evidence="1">
    <location>
        <position position="46"/>
    </location>
    <ligand>
        <name>Zn(2+)</name>
        <dbReference type="ChEBI" id="CHEBI:29105"/>
    </ligand>
</feature>
<feature type="binding site" evidence="1">
    <location>
        <position position="49"/>
    </location>
    <ligand>
        <name>Zn(2+)</name>
        <dbReference type="ChEBI" id="CHEBI:29105"/>
    </ligand>
</feature>
<accession>B4SEP9</accession>
<comment type="function">
    <text evidence="1">Component of the acetyl coenzyme A carboxylase (ACC) complex. Biotin carboxylase (BC) catalyzes the carboxylation of biotin on its carrier protein (BCCP) and then the CO(2) group is transferred by the transcarboxylase to acetyl-CoA to form malonyl-CoA.</text>
</comment>
<comment type="catalytic activity">
    <reaction evidence="1">
        <text>N(6)-carboxybiotinyl-L-lysyl-[protein] + acetyl-CoA = N(6)-biotinyl-L-lysyl-[protein] + malonyl-CoA</text>
        <dbReference type="Rhea" id="RHEA:54728"/>
        <dbReference type="Rhea" id="RHEA-COMP:10505"/>
        <dbReference type="Rhea" id="RHEA-COMP:10506"/>
        <dbReference type="ChEBI" id="CHEBI:57288"/>
        <dbReference type="ChEBI" id="CHEBI:57384"/>
        <dbReference type="ChEBI" id="CHEBI:83144"/>
        <dbReference type="ChEBI" id="CHEBI:83145"/>
        <dbReference type="EC" id="2.1.3.15"/>
    </reaction>
</comment>
<comment type="cofactor">
    <cofactor evidence="1">
        <name>Zn(2+)</name>
        <dbReference type="ChEBI" id="CHEBI:29105"/>
    </cofactor>
    <text evidence="1">Binds 1 zinc ion per subunit.</text>
</comment>
<comment type="pathway">
    <text evidence="1">Lipid metabolism; malonyl-CoA biosynthesis; malonyl-CoA from acetyl-CoA: step 1/1.</text>
</comment>
<comment type="subunit">
    <text evidence="1">Acetyl-CoA carboxylase is a heterohexamer composed of biotin carboxyl carrier protein (AccB), biotin carboxylase (AccC) and two subunits each of ACCase subunit alpha (AccA) and ACCase subunit beta (AccD).</text>
</comment>
<comment type="subcellular location">
    <subcellularLocation>
        <location evidence="1">Cytoplasm</location>
    </subcellularLocation>
</comment>
<comment type="similarity">
    <text evidence="1">Belongs to the AccD/PCCB family.</text>
</comment>
<keyword id="KW-0067">ATP-binding</keyword>
<keyword id="KW-0963">Cytoplasm</keyword>
<keyword id="KW-0275">Fatty acid biosynthesis</keyword>
<keyword id="KW-0276">Fatty acid metabolism</keyword>
<keyword id="KW-0444">Lipid biosynthesis</keyword>
<keyword id="KW-0443">Lipid metabolism</keyword>
<keyword id="KW-0479">Metal-binding</keyword>
<keyword id="KW-0547">Nucleotide-binding</keyword>
<keyword id="KW-1185">Reference proteome</keyword>
<keyword id="KW-0808">Transferase</keyword>
<keyword id="KW-0862">Zinc</keyword>
<keyword id="KW-0863">Zinc-finger</keyword>
<evidence type="ECO:0000255" key="1">
    <source>
        <dbReference type="HAMAP-Rule" id="MF_01395"/>
    </source>
</evidence>
<evidence type="ECO:0000255" key="2">
    <source>
        <dbReference type="PROSITE-ProRule" id="PRU01136"/>
    </source>
</evidence>
<protein>
    <recommendedName>
        <fullName evidence="1">Acetyl-coenzyme A carboxylase carboxyl transferase subunit beta</fullName>
        <shortName evidence="1">ACCase subunit beta</shortName>
        <shortName evidence="1">Acetyl-CoA carboxylase carboxyltransferase subunit beta</shortName>
        <ecNumber evidence="1">2.1.3.15</ecNumber>
    </recommendedName>
</protein>
<dbReference type="EC" id="2.1.3.15" evidence="1"/>
<dbReference type="EMBL" id="CP001110">
    <property type="protein sequence ID" value="ACF44575.1"/>
    <property type="molecule type" value="Genomic_DNA"/>
</dbReference>
<dbReference type="RefSeq" id="WP_012509049.1">
    <property type="nucleotide sequence ID" value="NC_011060.1"/>
</dbReference>
<dbReference type="SMR" id="B4SEP9"/>
<dbReference type="STRING" id="324925.Ppha_2384"/>
<dbReference type="KEGG" id="pph:Ppha_2384"/>
<dbReference type="eggNOG" id="COG0777">
    <property type="taxonomic scope" value="Bacteria"/>
</dbReference>
<dbReference type="HOGENOM" id="CLU_015486_1_0_10"/>
<dbReference type="OrthoDB" id="9772975at2"/>
<dbReference type="UniPathway" id="UPA00655">
    <property type="reaction ID" value="UER00711"/>
</dbReference>
<dbReference type="Proteomes" id="UP000002724">
    <property type="component" value="Chromosome"/>
</dbReference>
<dbReference type="GO" id="GO:0009317">
    <property type="term" value="C:acetyl-CoA carboxylase complex"/>
    <property type="evidence" value="ECO:0007669"/>
    <property type="project" value="InterPro"/>
</dbReference>
<dbReference type="GO" id="GO:0003989">
    <property type="term" value="F:acetyl-CoA carboxylase activity"/>
    <property type="evidence" value="ECO:0007669"/>
    <property type="project" value="InterPro"/>
</dbReference>
<dbReference type="GO" id="GO:0005524">
    <property type="term" value="F:ATP binding"/>
    <property type="evidence" value="ECO:0007669"/>
    <property type="project" value="UniProtKB-KW"/>
</dbReference>
<dbReference type="GO" id="GO:0016743">
    <property type="term" value="F:carboxyl- or carbamoyltransferase activity"/>
    <property type="evidence" value="ECO:0007669"/>
    <property type="project" value="UniProtKB-UniRule"/>
</dbReference>
<dbReference type="GO" id="GO:0008270">
    <property type="term" value="F:zinc ion binding"/>
    <property type="evidence" value="ECO:0007669"/>
    <property type="project" value="UniProtKB-UniRule"/>
</dbReference>
<dbReference type="GO" id="GO:0006633">
    <property type="term" value="P:fatty acid biosynthetic process"/>
    <property type="evidence" value="ECO:0007669"/>
    <property type="project" value="UniProtKB-KW"/>
</dbReference>
<dbReference type="GO" id="GO:2001295">
    <property type="term" value="P:malonyl-CoA biosynthetic process"/>
    <property type="evidence" value="ECO:0007669"/>
    <property type="project" value="UniProtKB-UniRule"/>
</dbReference>
<dbReference type="Gene3D" id="3.90.226.10">
    <property type="entry name" value="2-enoyl-CoA Hydratase, Chain A, domain 1"/>
    <property type="match status" value="1"/>
</dbReference>
<dbReference type="HAMAP" id="MF_01395">
    <property type="entry name" value="AcetylCoA_CT_beta"/>
    <property type="match status" value="1"/>
</dbReference>
<dbReference type="InterPro" id="IPR034733">
    <property type="entry name" value="AcCoA_carboxyl_beta"/>
</dbReference>
<dbReference type="InterPro" id="IPR000438">
    <property type="entry name" value="Acetyl_CoA_COase_Trfase_b_su"/>
</dbReference>
<dbReference type="InterPro" id="IPR029045">
    <property type="entry name" value="ClpP/crotonase-like_dom_sf"/>
</dbReference>
<dbReference type="InterPro" id="IPR011762">
    <property type="entry name" value="COA_CT_N"/>
</dbReference>
<dbReference type="InterPro" id="IPR041010">
    <property type="entry name" value="Znf-ACC"/>
</dbReference>
<dbReference type="NCBIfam" id="TIGR00515">
    <property type="entry name" value="accD"/>
    <property type="match status" value="1"/>
</dbReference>
<dbReference type="PANTHER" id="PTHR42995">
    <property type="entry name" value="ACETYL-COENZYME A CARBOXYLASE CARBOXYL TRANSFERASE SUBUNIT BETA, CHLOROPLASTIC"/>
    <property type="match status" value="1"/>
</dbReference>
<dbReference type="PANTHER" id="PTHR42995:SF5">
    <property type="entry name" value="ACETYL-COENZYME A CARBOXYLASE CARBOXYL TRANSFERASE SUBUNIT BETA, CHLOROPLASTIC"/>
    <property type="match status" value="1"/>
</dbReference>
<dbReference type="Pfam" id="PF01039">
    <property type="entry name" value="Carboxyl_trans"/>
    <property type="match status" value="1"/>
</dbReference>
<dbReference type="Pfam" id="PF17848">
    <property type="entry name" value="Zn_ribbon_ACC"/>
    <property type="match status" value="1"/>
</dbReference>
<dbReference type="PRINTS" id="PR01070">
    <property type="entry name" value="ACCCTRFRASEB"/>
</dbReference>
<dbReference type="SUPFAM" id="SSF52096">
    <property type="entry name" value="ClpP/crotonase"/>
    <property type="match status" value="1"/>
</dbReference>
<dbReference type="PROSITE" id="PS50980">
    <property type="entry name" value="COA_CT_NTER"/>
    <property type="match status" value="1"/>
</dbReference>
<gene>
    <name evidence="1" type="primary">accD</name>
    <name type="ordered locus">Ppha_2384</name>
</gene>
<sequence length="279" mass="31418">MAWFKRVKPSIRPTDKRDMPEGLWWKCEECGAMLHKKQFEDHFFTCAECGHHFRISPYKYFSILFDDDKYVEFDDHLRSADPLGFVDTKKYPDRVHDTIEKSGKTEACRNAHGESGGRPLVVSAMDFGFIGGSMGSVVGEKIARAVDKSLELDAPLLVISQSGGARMMEGAFSLMQMAKTAARLTRLSERKLPFVSLMTDPTMGGISASFAMLGDINISEPKALIGFAGPRVIRDTIKRDLPEGFQRAEFLLEQGFLDRVIHRRDLKNELVTLFSMLKV</sequence>
<name>ACCD_PELPB</name>
<proteinExistence type="inferred from homology"/>
<organism>
    <name type="scientific">Pelodictyon phaeoclathratiforme (strain DSM 5477 / BU-1)</name>
    <dbReference type="NCBI Taxonomy" id="324925"/>
    <lineage>
        <taxon>Bacteria</taxon>
        <taxon>Pseudomonadati</taxon>
        <taxon>Chlorobiota</taxon>
        <taxon>Chlorobiia</taxon>
        <taxon>Chlorobiales</taxon>
        <taxon>Chlorobiaceae</taxon>
        <taxon>Chlorobium/Pelodictyon group</taxon>
        <taxon>Pelodictyon</taxon>
    </lineage>
</organism>